<keyword id="KW-0131">Cell cycle</keyword>
<keyword id="KW-0132">Cell division</keyword>
<keyword id="KW-0717">Septation</keyword>
<feature type="chain" id="PRO_1000213101" description="Putative septation protein SpoVG">
    <location>
        <begin position="1"/>
        <end position="96"/>
    </location>
</feature>
<protein>
    <recommendedName>
        <fullName evidence="1">Putative septation protein SpoVG</fullName>
    </recommendedName>
</protein>
<gene>
    <name evidence="1" type="primary">spoVG</name>
    <name type="ordered locus">GWCH70_0044</name>
</gene>
<sequence length="96" mass="10731">MEVTDVRLRRVNTEGRMKAIASITLDNEFVVHDIRVIDGNNGLFVAMPSKRTPDGEFRDIAHPINSATRGKIQEAILAEYHRLGKLEEELEEAGAS</sequence>
<reference key="1">
    <citation type="submission" date="2009-06" db="EMBL/GenBank/DDBJ databases">
        <title>Complete sequence of chromosome of Geopacillus sp. WCH70.</title>
        <authorList>
            <consortium name="US DOE Joint Genome Institute"/>
            <person name="Lucas S."/>
            <person name="Copeland A."/>
            <person name="Lapidus A."/>
            <person name="Glavina del Rio T."/>
            <person name="Dalin E."/>
            <person name="Tice H."/>
            <person name="Bruce D."/>
            <person name="Goodwin L."/>
            <person name="Pitluck S."/>
            <person name="Chertkov O."/>
            <person name="Brettin T."/>
            <person name="Detter J.C."/>
            <person name="Han C."/>
            <person name="Larimer F."/>
            <person name="Land M."/>
            <person name="Hauser L."/>
            <person name="Kyrpides N."/>
            <person name="Mikhailova N."/>
            <person name="Brumm P."/>
            <person name="Mead D.A."/>
            <person name="Richardson P."/>
        </authorList>
    </citation>
    <scope>NUCLEOTIDE SEQUENCE [LARGE SCALE GENOMIC DNA]</scope>
    <source>
        <strain>WCH70</strain>
    </source>
</reference>
<proteinExistence type="inferred from homology"/>
<dbReference type="EMBL" id="CP001638">
    <property type="protein sequence ID" value="ACS22986.1"/>
    <property type="molecule type" value="Genomic_DNA"/>
</dbReference>
<dbReference type="SMR" id="C5D370"/>
<dbReference type="STRING" id="471223.GWCH70_0044"/>
<dbReference type="KEGG" id="gwc:GWCH70_0044"/>
<dbReference type="eggNOG" id="COG2088">
    <property type="taxonomic scope" value="Bacteria"/>
</dbReference>
<dbReference type="HOGENOM" id="CLU_103669_2_1_9"/>
<dbReference type="OrthoDB" id="9796286at2"/>
<dbReference type="GO" id="GO:0000917">
    <property type="term" value="P:division septum assembly"/>
    <property type="evidence" value="ECO:0007669"/>
    <property type="project" value="UniProtKB-KW"/>
</dbReference>
<dbReference type="GO" id="GO:0030435">
    <property type="term" value="P:sporulation resulting in formation of a cellular spore"/>
    <property type="evidence" value="ECO:0007669"/>
    <property type="project" value="InterPro"/>
</dbReference>
<dbReference type="FunFam" id="3.30.1120.40:FF:000001">
    <property type="entry name" value="Putative septation protein SpoVG"/>
    <property type="match status" value="1"/>
</dbReference>
<dbReference type="Gene3D" id="3.30.1120.40">
    <property type="entry name" value="Stage V sporulation protein G"/>
    <property type="match status" value="1"/>
</dbReference>
<dbReference type="HAMAP" id="MF_00819">
    <property type="entry name" value="SpoVG"/>
    <property type="match status" value="1"/>
</dbReference>
<dbReference type="InterPro" id="IPR007170">
    <property type="entry name" value="SpoVG"/>
</dbReference>
<dbReference type="InterPro" id="IPR036751">
    <property type="entry name" value="SpoVG_sf"/>
</dbReference>
<dbReference type="NCBIfam" id="NF009749">
    <property type="entry name" value="PRK13259.1"/>
    <property type="match status" value="1"/>
</dbReference>
<dbReference type="PANTHER" id="PTHR38429">
    <property type="entry name" value="SEPTATION PROTEIN SPOVG-RELATED"/>
    <property type="match status" value="1"/>
</dbReference>
<dbReference type="PANTHER" id="PTHR38429:SF1">
    <property type="entry name" value="SEPTATION PROTEIN SPOVG-RELATED"/>
    <property type="match status" value="1"/>
</dbReference>
<dbReference type="Pfam" id="PF04026">
    <property type="entry name" value="SpoVG"/>
    <property type="match status" value="1"/>
</dbReference>
<dbReference type="SUPFAM" id="SSF160537">
    <property type="entry name" value="SpoVG-like"/>
    <property type="match status" value="1"/>
</dbReference>
<evidence type="ECO:0000255" key="1">
    <source>
        <dbReference type="HAMAP-Rule" id="MF_00819"/>
    </source>
</evidence>
<comment type="function">
    <text evidence="1">Could be involved in septation.</text>
</comment>
<comment type="similarity">
    <text evidence="1">Belongs to the SpoVG family.</text>
</comment>
<accession>C5D370</accession>
<name>SP5G_GEOSW</name>
<organism>
    <name type="scientific">Geobacillus sp. (strain WCH70)</name>
    <dbReference type="NCBI Taxonomy" id="471223"/>
    <lineage>
        <taxon>Bacteria</taxon>
        <taxon>Bacillati</taxon>
        <taxon>Bacillota</taxon>
        <taxon>Bacilli</taxon>
        <taxon>Bacillales</taxon>
        <taxon>Anoxybacillaceae</taxon>
        <taxon>Geobacillus</taxon>
    </lineage>
</organism>